<feature type="chain" id="PRO_0000128453" description="Small ribosomal subunit protein uS17">
    <location>
        <begin position="1"/>
        <end position="83"/>
    </location>
</feature>
<organism>
    <name type="scientific">Chlamydia muridarum (strain MoPn / Nigg)</name>
    <dbReference type="NCBI Taxonomy" id="243161"/>
    <lineage>
        <taxon>Bacteria</taxon>
        <taxon>Pseudomonadati</taxon>
        <taxon>Chlamydiota</taxon>
        <taxon>Chlamydiia</taxon>
        <taxon>Chlamydiales</taxon>
        <taxon>Chlamydiaceae</taxon>
        <taxon>Chlamydia/Chlamydophila group</taxon>
        <taxon>Chlamydia</taxon>
    </lineage>
</organism>
<name>RS17_CHLMU</name>
<protein>
    <recommendedName>
        <fullName evidence="1">Small ribosomal subunit protein uS17</fullName>
    </recommendedName>
    <alternativeName>
        <fullName evidence="2">30S ribosomal protein S17</fullName>
    </alternativeName>
</protein>
<evidence type="ECO:0000255" key="1">
    <source>
        <dbReference type="HAMAP-Rule" id="MF_01345"/>
    </source>
</evidence>
<evidence type="ECO:0000305" key="2"/>
<gene>
    <name evidence="1" type="primary">rpsQ</name>
    <name type="ordered locus">TC_0806</name>
</gene>
<dbReference type="EMBL" id="AE002160">
    <property type="protein sequence ID" value="AAF39609.1"/>
    <property type="molecule type" value="Genomic_DNA"/>
</dbReference>
<dbReference type="PIR" id="F81664">
    <property type="entry name" value="F81664"/>
</dbReference>
<dbReference type="RefSeq" id="WP_010231627.1">
    <property type="nucleotide sequence ID" value="NZ_CP063055.1"/>
</dbReference>
<dbReference type="SMR" id="Q9PJM3"/>
<dbReference type="GeneID" id="1246173"/>
<dbReference type="KEGG" id="cmu:TC_0806"/>
<dbReference type="eggNOG" id="COG0186">
    <property type="taxonomic scope" value="Bacteria"/>
</dbReference>
<dbReference type="HOGENOM" id="CLU_073626_1_0_0"/>
<dbReference type="OrthoDB" id="9811714at2"/>
<dbReference type="Proteomes" id="UP000000800">
    <property type="component" value="Chromosome"/>
</dbReference>
<dbReference type="GO" id="GO:0022627">
    <property type="term" value="C:cytosolic small ribosomal subunit"/>
    <property type="evidence" value="ECO:0007669"/>
    <property type="project" value="TreeGrafter"/>
</dbReference>
<dbReference type="GO" id="GO:0019843">
    <property type="term" value="F:rRNA binding"/>
    <property type="evidence" value="ECO:0007669"/>
    <property type="project" value="UniProtKB-UniRule"/>
</dbReference>
<dbReference type="GO" id="GO:0003735">
    <property type="term" value="F:structural constituent of ribosome"/>
    <property type="evidence" value="ECO:0007669"/>
    <property type="project" value="InterPro"/>
</dbReference>
<dbReference type="GO" id="GO:0006412">
    <property type="term" value="P:translation"/>
    <property type="evidence" value="ECO:0007669"/>
    <property type="project" value="UniProtKB-UniRule"/>
</dbReference>
<dbReference type="CDD" id="cd00364">
    <property type="entry name" value="Ribosomal_uS17"/>
    <property type="match status" value="1"/>
</dbReference>
<dbReference type="Gene3D" id="2.40.50.140">
    <property type="entry name" value="Nucleic acid-binding proteins"/>
    <property type="match status" value="1"/>
</dbReference>
<dbReference type="HAMAP" id="MF_01345_B">
    <property type="entry name" value="Ribosomal_uS17_B"/>
    <property type="match status" value="1"/>
</dbReference>
<dbReference type="InterPro" id="IPR012340">
    <property type="entry name" value="NA-bd_OB-fold"/>
</dbReference>
<dbReference type="InterPro" id="IPR000266">
    <property type="entry name" value="Ribosomal_uS17"/>
</dbReference>
<dbReference type="InterPro" id="IPR019984">
    <property type="entry name" value="Ribosomal_uS17_bact/chlr"/>
</dbReference>
<dbReference type="InterPro" id="IPR019979">
    <property type="entry name" value="Ribosomal_uS17_CS"/>
</dbReference>
<dbReference type="NCBIfam" id="NF004123">
    <property type="entry name" value="PRK05610.1"/>
    <property type="match status" value="1"/>
</dbReference>
<dbReference type="NCBIfam" id="TIGR03635">
    <property type="entry name" value="uS17_bact"/>
    <property type="match status" value="1"/>
</dbReference>
<dbReference type="PANTHER" id="PTHR10744">
    <property type="entry name" value="40S RIBOSOMAL PROTEIN S11 FAMILY MEMBER"/>
    <property type="match status" value="1"/>
</dbReference>
<dbReference type="PANTHER" id="PTHR10744:SF1">
    <property type="entry name" value="SMALL RIBOSOMAL SUBUNIT PROTEIN US17M"/>
    <property type="match status" value="1"/>
</dbReference>
<dbReference type="Pfam" id="PF00366">
    <property type="entry name" value="Ribosomal_S17"/>
    <property type="match status" value="1"/>
</dbReference>
<dbReference type="PRINTS" id="PR00973">
    <property type="entry name" value="RIBOSOMALS17"/>
</dbReference>
<dbReference type="SUPFAM" id="SSF50249">
    <property type="entry name" value="Nucleic acid-binding proteins"/>
    <property type="match status" value="1"/>
</dbReference>
<dbReference type="PROSITE" id="PS00056">
    <property type="entry name" value="RIBOSOMAL_S17"/>
    <property type="match status" value="1"/>
</dbReference>
<accession>Q9PJM3</accession>
<reference key="1">
    <citation type="journal article" date="2000" name="Nucleic Acids Res.">
        <title>Genome sequences of Chlamydia trachomatis MoPn and Chlamydia pneumoniae AR39.</title>
        <authorList>
            <person name="Read T.D."/>
            <person name="Brunham R.C."/>
            <person name="Shen C."/>
            <person name="Gill S.R."/>
            <person name="Heidelberg J.F."/>
            <person name="White O."/>
            <person name="Hickey E.K."/>
            <person name="Peterson J.D."/>
            <person name="Utterback T.R."/>
            <person name="Berry K.J."/>
            <person name="Bass S."/>
            <person name="Linher K.D."/>
            <person name="Weidman J.F."/>
            <person name="Khouri H.M."/>
            <person name="Craven B."/>
            <person name="Bowman C."/>
            <person name="Dodson R.J."/>
            <person name="Gwinn M.L."/>
            <person name="Nelson W.C."/>
            <person name="DeBoy R.T."/>
            <person name="Kolonay J.F."/>
            <person name="McClarty G."/>
            <person name="Salzberg S.L."/>
            <person name="Eisen J.A."/>
            <person name="Fraser C.M."/>
        </authorList>
    </citation>
    <scope>NUCLEOTIDE SEQUENCE [LARGE SCALE GENOMIC DNA]</scope>
    <source>
        <strain>MoPn / Nigg</strain>
    </source>
</reference>
<proteinExistence type="inferred from homology"/>
<keyword id="KW-0687">Ribonucleoprotein</keyword>
<keyword id="KW-0689">Ribosomal protein</keyword>
<keyword id="KW-0694">RNA-binding</keyword>
<keyword id="KW-0699">rRNA-binding</keyword>
<sequence length="83" mass="9703">MASDVRGRRKTKIGVVVSSKMEKTVVVRVERVYSHPQYAKVVRDSSKYYAHNELDVKEGDTVRIQETRPLSKTKRWRVVDRVN</sequence>
<comment type="function">
    <text evidence="1">One of the primary rRNA binding proteins, it binds specifically to the 5'-end of 16S ribosomal RNA.</text>
</comment>
<comment type="subunit">
    <text evidence="1">Part of the 30S ribosomal subunit.</text>
</comment>
<comment type="similarity">
    <text evidence="1">Belongs to the universal ribosomal protein uS17 family.</text>
</comment>